<feature type="chain" id="PRO_0000342235" description="LL-diaminopimelate aminotransferase">
    <location>
        <begin position="1"/>
        <end position="388"/>
    </location>
</feature>
<feature type="binding site" evidence="1">
    <location>
        <position position="16"/>
    </location>
    <ligand>
        <name>substrate</name>
    </ligand>
</feature>
<feature type="binding site" evidence="1">
    <location>
        <position position="41"/>
    </location>
    <ligand>
        <name>substrate</name>
    </ligand>
</feature>
<feature type="binding site" evidence="1">
    <location>
        <position position="70"/>
    </location>
    <ligand>
        <name>pyridoxal 5'-phosphate</name>
        <dbReference type="ChEBI" id="CHEBI:597326"/>
    </ligand>
</feature>
<feature type="binding site" evidence="1">
    <location>
        <begin position="104"/>
        <end position="105"/>
    </location>
    <ligand>
        <name>pyridoxal 5'-phosphate</name>
        <dbReference type="ChEBI" id="CHEBI:597326"/>
    </ligand>
</feature>
<feature type="binding site" evidence="1">
    <location>
        <position position="105"/>
    </location>
    <ligand>
        <name>substrate</name>
    </ligand>
</feature>
<feature type="binding site" evidence="1">
    <location>
        <position position="129"/>
    </location>
    <ligand>
        <name>pyridoxal 5'-phosphate</name>
        <dbReference type="ChEBI" id="CHEBI:597326"/>
    </ligand>
</feature>
<feature type="binding site" evidence="1">
    <location>
        <position position="129"/>
    </location>
    <ligand>
        <name>substrate</name>
    </ligand>
</feature>
<feature type="binding site" evidence="1">
    <location>
        <position position="179"/>
    </location>
    <ligand>
        <name>pyridoxal 5'-phosphate</name>
        <dbReference type="ChEBI" id="CHEBI:597326"/>
    </ligand>
</feature>
<feature type="binding site" evidence="1">
    <location>
        <position position="179"/>
    </location>
    <ligand>
        <name>substrate</name>
    </ligand>
</feature>
<feature type="binding site" evidence="1">
    <location>
        <position position="210"/>
    </location>
    <ligand>
        <name>pyridoxal 5'-phosphate</name>
        <dbReference type="ChEBI" id="CHEBI:597326"/>
    </ligand>
</feature>
<feature type="binding site" evidence="1">
    <location>
        <begin position="239"/>
        <end position="241"/>
    </location>
    <ligand>
        <name>pyridoxal 5'-phosphate</name>
        <dbReference type="ChEBI" id="CHEBI:597326"/>
    </ligand>
</feature>
<feature type="binding site" evidence="1">
    <location>
        <position position="250"/>
    </location>
    <ligand>
        <name>pyridoxal 5'-phosphate</name>
        <dbReference type="ChEBI" id="CHEBI:597326"/>
    </ligand>
</feature>
<feature type="binding site" evidence="1">
    <location>
        <position position="368"/>
    </location>
    <ligand>
        <name>substrate</name>
    </ligand>
</feature>
<feature type="modified residue" description="N6-(pyridoxal phosphate)lysine" evidence="1">
    <location>
        <position position="242"/>
    </location>
</feature>
<organism>
    <name type="scientific">Oleidesulfovibrio alaskensis (strain ATCC BAA-1058 / DSM 17464 / G20)</name>
    <name type="common">Desulfovibrio alaskensis</name>
    <dbReference type="NCBI Taxonomy" id="207559"/>
    <lineage>
        <taxon>Bacteria</taxon>
        <taxon>Pseudomonadati</taxon>
        <taxon>Thermodesulfobacteriota</taxon>
        <taxon>Desulfovibrionia</taxon>
        <taxon>Desulfovibrionales</taxon>
        <taxon>Desulfovibrionaceae</taxon>
        <taxon>Oleidesulfovibrio</taxon>
    </lineage>
</organism>
<reference key="1">
    <citation type="journal article" date="2011" name="J. Bacteriol.">
        <title>Complete genome sequence and updated annotation of Desulfovibrio alaskensis G20.</title>
        <authorList>
            <person name="Hauser L.J."/>
            <person name="Land M.L."/>
            <person name="Brown S.D."/>
            <person name="Larimer F."/>
            <person name="Keller K.L."/>
            <person name="Rapp-Giles B.J."/>
            <person name="Price M.N."/>
            <person name="Lin M."/>
            <person name="Bruce D.C."/>
            <person name="Detter J.C."/>
            <person name="Tapia R."/>
            <person name="Han C.S."/>
            <person name="Goodwin L.A."/>
            <person name="Cheng J.F."/>
            <person name="Pitluck S."/>
            <person name="Copeland A."/>
            <person name="Lucas S."/>
            <person name="Nolan M."/>
            <person name="Lapidus A.L."/>
            <person name="Palumbo A.V."/>
            <person name="Wall J.D."/>
        </authorList>
    </citation>
    <scope>NUCLEOTIDE SEQUENCE [LARGE SCALE GENOMIC DNA]</scope>
    <source>
        <strain>ATCC BAA-1058 / DSM 17464 / G20</strain>
    </source>
</reference>
<comment type="function">
    <text evidence="1">Involved in the synthesis of meso-diaminopimelate (m-DAP or DL-DAP), required for both lysine and peptidoglycan biosynthesis. Catalyzes the direct conversion of tetrahydrodipicolinate to LL-diaminopimelate.</text>
</comment>
<comment type="catalytic activity">
    <reaction evidence="1">
        <text>(2S,6S)-2,6-diaminopimelate + 2-oxoglutarate = (S)-2,3,4,5-tetrahydrodipicolinate + L-glutamate + H2O + H(+)</text>
        <dbReference type="Rhea" id="RHEA:23988"/>
        <dbReference type="ChEBI" id="CHEBI:15377"/>
        <dbReference type="ChEBI" id="CHEBI:15378"/>
        <dbReference type="ChEBI" id="CHEBI:16810"/>
        <dbReference type="ChEBI" id="CHEBI:16845"/>
        <dbReference type="ChEBI" id="CHEBI:29985"/>
        <dbReference type="ChEBI" id="CHEBI:57609"/>
        <dbReference type="EC" id="2.6.1.83"/>
    </reaction>
</comment>
<comment type="cofactor">
    <cofactor evidence="1">
        <name>pyridoxal 5'-phosphate</name>
        <dbReference type="ChEBI" id="CHEBI:597326"/>
    </cofactor>
</comment>
<comment type="pathway">
    <text evidence="1">Amino-acid biosynthesis; L-lysine biosynthesis via DAP pathway; LL-2,6-diaminopimelate from (S)-tetrahydrodipicolinate (aminotransferase route): step 1/1.</text>
</comment>
<comment type="subunit">
    <text evidence="1">Homodimer.</text>
</comment>
<comment type="similarity">
    <text evidence="1">Belongs to the class-I pyridoxal-phosphate-dependent aminotransferase family. LL-diaminopimelate aminotransferase subfamily.</text>
</comment>
<dbReference type="EC" id="2.6.1.83" evidence="1"/>
<dbReference type="EMBL" id="CP000112">
    <property type="protein sequence ID" value="ABB38767.1"/>
    <property type="molecule type" value="Genomic_DNA"/>
</dbReference>
<dbReference type="RefSeq" id="WP_011367877.1">
    <property type="nucleotide sequence ID" value="NC_007519.1"/>
</dbReference>
<dbReference type="SMR" id="Q30ZX9"/>
<dbReference type="STRING" id="207559.Dde_1970"/>
<dbReference type="KEGG" id="dde:Dde_1970"/>
<dbReference type="eggNOG" id="COG0436">
    <property type="taxonomic scope" value="Bacteria"/>
</dbReference>
<dbReference type="HOGENOM" id="CLU_017584_4_5_7"/>
<dbReference type="UniPathway" id="UPA00034">
    <property type="reaction ID" value="UER00466"/>
</dbReference>
<dbReference type="Proteomes" id="UP000002710">
    <property type="component" value="Chromosome"/>
</dbReference>
<dbReference type="GO" id="GO:0010285">
    <property type="term" value="F:L,L-diaminopimelate aminotransferase activity"/>
    <property type="evidence" value="ECO:0007669"/>
    <property type="project" value="UniProtKB-EC"/>
</dbReference>
<dbReference type="GO" id="GO:0030170">
    <property type="term" value="F:pyridoxal phosphate binding"/>
    <property type="evidence" value="ECO:0007669"/>
    <property type="project" value="InterPro"/>
</dbReference>
<dbReference type="GO" id="GO:0009089">
    <property type="term" value="P:lysine biosynthetic process via diaminopimelate"/>
    <property type="evidence" value="ECO:0007669"/>
    <property type="project" value="UniProtKB-UniPathway"/>
</dbReference>
<dbReference type="CDD" id="cd00609">
    <property type="entry name" value="AAT_like"/>
    <property type="match status" value="1"/>
</dbReference>
<dbReference type="Gene3D" id="3.90.1150.10">
    <property type="entry name" value="Aspartate Aminotransferase, domain 1"/>
    <property type="match status" value="1"/>
</dbReference>
<dbReference type="Gene3D" id="3.40.640.10">
    <property type="entry name" value="Type I PLP-dependent aspartate aminotransferase-like (Major domain)"/>
    <property type="match status" value="1"/>
</dbReference>
<dbReference type="HAMAP" id="MF_01642">
    <property type="entry name" value="DapL_aminotrans_1"/>
    <property type="match status" value="1"/>
</dbReference>
<dbReference type="InterPro" id="IPR004839">
    <property type="entry name" value="Aminotransferase_I/II_large"/>
</dbReference>
<dbReference type="InterPro" id="IPR019881">
    <property type="entry name" value="DAP-NH2Trfase_DapL_Desulfo"/>
</dbReference>
<dbReference type="InterPro" id="IPR019942">
    <property type="entry name" value="DapL/ALD1"/>
</dbReference>
<dbReference type="InterPro" id="IPR050881">
    <property type="entry name" value="LL-DAP_aminotransferase"/>
</dbReference>
<dbReference type="InterPro" id="IPR004838">
    <property type="entry name" value="NHTrfase_class1_PyrdxlP-BS"/>
</dbReference>
<dbReference type="InterPro" id="IPR015424">
    <property type="entry name" value="PyrdxlP-dep_Trfase"/>
</dbReference>
<dbReference type="InterPro" id="IPR015421">
    <property type="entry name" value="PyrdxlP-dep_Trfase_major"/>
</dbReference>
<dbReference type="InterPro" id="IPR015422">
    <property type="entry name" value="PyrdxlP-dep_Trfase_small"/>
</dbReference>
<dbReference type="NCBIfam" id="TIGR03540">
    <property type="entry name" value="DapC_direct"/>
    <property type="match status" value="1"/>
</dbReference>
<dbReference type="NCBIfam" id="NF006756">
    <property type="entry name" value="PRK09276.1"/>
    <property type="match status" value="1"/>
</dbReference>
<dbReference type="PANTHER" id="PTHR42832">
    <property type="entry name" value="AMINO ACID AMINOTRANSFERASE"/>
    <property type="match status" value="1"/>
</dbReference>
<dbReference type="PANTHER" id="PTHR42832:SF3">
    <property type="entry name" value="L-GLUTAMINE--4-(METHYLSULFANYL)-2-OXOBUTANOATE AMINOTRANSFERASE"/>
    <property type="match status" value="1"/>
</dbReference>
<dbReference type="Pfam" id="PF00155">
    <property type="entry name" value="Aminotran_1_2"/>
    <property type="match status" value="1"/>
</dbReference>
<dbReference type="SUPFAM" id="SSF53383">
    <property type="entry name" value="PLP-dependent transferases"/>
    <property type="match status" value="1"/>
</dbReference>
<dbReference type="PROSITE" id="PS00105">
    <property type="entry name" value="AA_TRANSFER_CLASS_1"/>
    <property type="match status" value="1"/>
</dbReference>
<sequence>MTQFTLADRLATLPPYLFAQIDKVKAEVAARGVDIISLGIGDPDMPTPDFVIEALKKAAEKPANHQYPSYTGMLAFRQEVANWYKRRYAVELDPKTEVLTLIGSKEGIAHFPTAFVNPGDLVLVCPPCYPVYAIASRFMGGVVQELPLLEENDFLPDLDAVDEATWEKARCIFVNYPNNPTAAMAPRSFFEKLIGIARKHNVIVVHDAAYTEMYYNENNRPLSIMEIPGAMDVAIEFNSLSKPYNMTGWRIAMAVGNASLVAGLGKVKENMDSGAFQAVQEAAIVALRDGDAFLAEIRDIYRKRRDTVIAALNKIGITCRVPEASLYVWARVPEGYTSSDFVTRVLQETGVVMTPGNGFGAAGEGYFRISLTVNDERLEEAVSRIASL</sequence>
<proteinExistence type="inferred from homology"/>
<protein>
    <recommendedName>
        <fullName evidence="1">LL-diaminopimelate aminotransferase</fullName>
        <shortName evidence="1">DAP-AT</shortName>
        <shortName evidence="1">DAP-aminotransferase</shortName>
        <shortName evidence="1">LL-DAP-aminotransferase</shortName>
        <ecNumber evidence="1">2.6.1.83</ecNumber>
    </recommendedName>
</protein>
<keyword id="KW-0032">Aminotransferase</keyword>
<keyword id="KW-0663">Pyridoxal phosphate</keyword>
<keyword id="KW-1185">Reference proteome</keyword>
<keyword id="KW-0808">Transferase</keyword>
<accession>Q30ZX9</accession>
<name>DAPAT_OLEA2</name>
<evidence type="ECO:0000255" key="1">
    <source>
        <dbReference type="HAMAP-Rule" id="MF_01642"/>
    </source>
</evidence>
<gene>
    <name evidence="1" type="primary">dapL</name>
    <name type="ordered locus">Dde_1970</name>
</gene>